<feature type="chain" id="PRO_0000144309" description="Tenomodulin">
    <location>
        <begin position="1"/>
        <end position="317"/>
    </location>
</feature>
<feature type="topological domain" description="Cytoplasmic" evidence="3">
    <location>
        <begin position="1"/>
        <end position="30"/>
    </location>
</feature>
<feature type="transmembrane region" description="Helical; Signal-anchor for type II membrane protein" evidence="3">
    <location>
        <begin position="31"/>
        <end position="50"/>
    </location>
</feature>
<feature type="topological domain" description="Extracellular" evidence="3">
    <location>
        <begin position="51"/>
        <end position="317"/>
    </location>
</feature>
<feature type="domain" description="BRICHOS" evidence="4">
    <location>
        <begin position="93"/>
        <end position="186"/>
    </location>
</feature>
<feature type="modified residue" description="Phosphoserine" evidence="2">
    <location>
        <position position="239"/>
    </location>
</feature>
<feature type="glycosylation site" description="N-linked (GlcNAc...) asparagine" evidence="3">
    <location>
        <position position="94"/>
    </location>
</feature>
<feature type="glycosylation site" description="N-linked (GlcNAc...) asparagine" evidence="3">
    <location>
        <position position="180"/>
    </location>
</feature>
<feature type="disulfide bond" evidence="1">
    <location>
        <begin position="120"/>
        <end position="178"/>
    </location>
</feature>
<feature type="sequence conflict" description="In Ref. 5; BAC25447." evidence="6" ref="5">
    <original>N</original>
    <variation>I</variation>
    <location>
        <position position="4"/>
    </location>
</feature>
<feature type="sequence conflict" description="In Ref. 5; BAC25447." evidence="6" ref="5">
    <original>K</original>
    <variation>I</variation>
    <location>
        <position position="21"/>
    </location>
</feature>
<feature type="sequence conflict" description="In Ref. 5; BAC25447." evidence="6" ref="5">
    <original>K</original>
    <variation>M</variation>
    <location>
        <position position="24"/>
    </location>
</feature>
<feature type="sequence conflict" description="In Ref. 5; BAC25447." evidence="6" ref="5">
    <original>KS</original>
    <variation>L</variation>
    <location>
        <begin position="27"/>
        <end position="28"/>
    </location>
</feature>
<feature type="sequence conflict" description="In Ref. 5; BAC25447." evidence="6" ref="5">
    <original>E</original>
    <variation>D</variation>
    <location>
        <position position="56"/>
    </location>
</feature>
<feature type="sequence conflict" description="In Ref. 5; BAC25447." evidence="6" ref="5">
    <original>K</original>
    <variation>I</variation>
    <location>
        <position position="60"/>
    </location>
</feature>
<comment type="function">
    <text>May be an angiogenesis inhibitor.</text>
</comment>
<comment type="subcellular location">
    <subcellularLocation>
        <location evidence="6">Membrane</location>
        <topology evidence="6">Single-pass type II membrane protein</topology>
    </subcellularLocation>
    <subcellularLocation>
        <location evidence="1">Nucleus envelope</location>
    </subcellularLocation>
</comment>
<comment type="tissue specificity">
    <text evidence="5">Widely expressed with highest expression in tendons and ligaments, in the diaphragm, eye and skeletal muscle. Expressed in neuronal cells of all brain regions. Very low expression, if any, in glial cells.</text>
</comment>
<comment type="developmental stage">
    <text evidence="5">Expression already detected at 9.5 dpc and maintained throughout embryonic development. At 17.5 dpc, high levels found in tendons and ligaments of the skeletomuscular system, including the knee joint, the upper limb and the intercostal ligaments. At this developmental stage, high expression is also detected in the tendinous part of the diaphragm. By contrast, low levels are observed in resting and proliferative chondrocytes of long bones and vertebral bodies, and in the cartilaginous part of the intervertebral disks. No expression in hypertrophic chondrocytes. Outside the skeletomuscular system, expressed in neuronal cells of all brain regions and the spinal cord, liver, lung, bowels, thymus and eye.</text>
</comment>
<comment type="similarity">
    <text evidence="6">Belongs to the chondromodulin-1 family.</text>
</comment>
<comment type="sequence caution" evidence="6">
    <conflict type="erroneous termination">
        <sequence resource="EMBL-CDS" id="BAC25447"/>
    </conflict>
    <text>Truncated C-terminus.</text>
</comment>
<organism>
    <name type="scientific">Mus musculus</name>
    <name type="common">Mouse</name>
    <dbReference type="NCBI Taxonomy" id="10090"/>
    <lineage>
        <taxon>Eukaryota</taxon>
        <taxon>Metazoa</taxon>
        <taxon>Chordata</taxon>
        <taxon>Craniata</taxon>
        <taxon>Vertebrata</taxon>
        <taxon>Euteleostomi</taxon>
        <taxon>Mammalia</taxon>
        <taxon>Eutheria</taxon>
        <taxon>Euarchontoglires</taxon>
        <taxon>Glires</taxon>
        <taxon>Rodentia</taxon>
        <taxon>Myomorpha</taxon>
        <taxon>Muroidea</taxon>
        <taxon>Muridae</taxon>
        <taxon>Murinae</taxon>
        <taxon>Mus</taxon>
        <taxon>Mus</taxon>
    </lineage>
</organism>
<proteinExistence type="evidence at transcript level"/>
<gene>
    <name type="primary">Tnmd</name>
    <name type="synonym">Chm1l</name>
</gene>
<accession>Q9EP64</accession>
<accession>Q8CET4</accession>
<keyword id="KW-1015">Disulfide bond</keyword>
<keyword id="KW-0325">Glycoprotein</keyword>
<keyword id="KW-0472">Membrane</keyword>
<keyword id="KW-0539">Nucleus</keyword>
<keyword id="KW-0597">Phosphoprotein</keyword>
<keyword id="KW-1185">Reference proteome</keyword>
<keyword id="KW-0735">Signal-anchor</keyword>
<keyword id="KW-0812">Transmembrane</keyword>
<keyword id="KW-1133">Transmembrane helix</keyword>
<evidence type="ECO:0000250" key="1"/>
<evidence type="ECO:0000250" key="2">
    <source>
        <dbReference type="UniProtKB" id="Q9ESC2"/>
    </source>
</evidence>
<evidence type="ECO:0000255" key="3"/>
<evidence type="ECO:0000255" key="4">
    <source>
        <dbReference type="PROSITE-ProRule" id="PRU00255"/>
    </source>
</evidence>
<evidence type="ECO:0000269" key="5">
    <source>
    </source>
</evidence>
<evidence type="ECO:0000305" key="6"/>
<protein>
    <recommendedName>
        <fullName>Tenomodulin</fullName>
        <shortName>TeM</shortName>
        <shortName>mTeM</shortName>
    </recommendedName>
    <alternativeName>
        <fullName>Chondromodulin-1-like protein</fullName>
        <shortName>ChM1L</shortName>
        <shortName>mChM1L</shortName>
    </alternativeName>
    <alternativeName>
        <fullName>Chondromodulin-I-like protein</fullName>
    </alternativeName>
    <alternativeName>
        <fullName>Myodulin</fullName>
    </alternativeName>
    <alternativeName>
        <fullName>Tendin</fullName>
    </alternativeName>
</protein>
<dbReference type="EMBL" id="AB055422">
    <property type="protein sequence ID" value="BAB21757.1"/>
    <property type="molecule type" value="mRNA"/>
</dbReference>
<dbReference type="EMBL" id="AF219993">
    <property type="protein sequence ID" value="AAG48938.1"/>
    <property type="molecule type" value="mRNA"/>
</dbReference>
<dbReference type="EMBL" id="AF291655">
    <property type="protein sequence ID" value="AAK83108.1"/>
    <property type="molecule type" value="mRNA"/>
</dbReference>
<dbReference type="EMBL" id="AF191768">
    <property type="protein sequence ID" value="AAG28393.1"/>
    <property type="molecule type" value="mRNA"/>
</dbReference>
<dbReference type="EMBL" id="AK014761">
    <property type="protein sequence ID" value="BAC25447.1"/>
    <property type="status" value="ALT_SEQ"/>
    <property type="molecule type" value="mRNA"/>
</dbReference>
<dbReference type="EMBL" id="BC006919">
    <property type="protein sequence ID" value="AAH06919.1"/>
    <property type="molecule type" value="mRNA"/>
</dbReference>
<dbReference type="EMBL" id="BC049944">
    <property type="protein sequence ID" value="AAH49944.1"/>
    <property type="molecule type" value="mRNA"/>
</dbReference>
<dbReference type="CCDS" id="CCDS30386.1"/>
<dbReference type="PIR" id="JC7603">
    <property type="entry name" value="JC7603"/>
</dbReference>
<dbReference type="RefSeq" id="NP_071717.1">
    <property type="nucleotide sequence ID" value="NM_022322.2"/>
</dbReference>
<dbReference type="FunCoup" id="Q9EP64">
    <property type="interactions" value="8"/>
</dbReference>
<dbReference type="STRING" id="10090.ENSMUSP00000033602"/>
<dbReference type="GlyCosmos" id="Q9EP64">
    <property type="glycosylation" value="2 sites, No reported glycans"/>
</dbReference>
<dbReference type="GlyGen" id="Q9EP64">
    <property type="glycosylation" value="2 sites, 1 N-linked glycan (1 site)"/>
</dbReference>
<dbReference type="PhosphoSitePlus" id="Q9EP64"/>
<dbReference type="jPOST" id="Q9EP64"/>
<dbReference type="PaxDb" id="10090-ENSMUSP00000033602"/>
<dbReference type="PeptideAtlas" id="Q9EP64"/>
<dbReference type="ProteomicsDB" id="259279"/>
<dbReference type="Antibodypedia" id="28504">
    <property type="antibodies" value="169 antibodies from 23 providers"/>
</dbReference>
<dbReference type="DNASU" id="64103"/>
<dbReference type="Ensembl" id="ENSMUST00000033602.9">
    <property type="protein sequence ID" value="ENSMUSP00000033602.9"/>
    <property type="gene ID" value="ENSMUSG00000031250.9"/>
</dbReference>
<dbReference type="GeneID" id="64103"/>
<dbReference type="KEGG" id="mmu:64103"/>
<dbReference type="UCSC" id="uc009uez.2">
    <property type="organism name" value="mouse"/>
</dbReference>
<dbReference type="AGR" id="MGI:1929885"/>
<dbReference type="CTD" id="64102"/>
<dbReference type="MGI" id="MGI:1929885">
    <property type="gene designation" value="Tnmd"/>
</dbReference>
<dbReference type="VEuPathDB" id="HostDB:ENSMUSG00000031250"/>
<dbReference type="eggNOG" id="ENOG502QPTP">
    <property type="taxonomic scope" value="Eukaryota"/>
</dbReference>
<dbReference type="GeneTree" id="ENSGT00480000042679"/>
<dbReference type="HOGENOM" id="CLU_071852_1_0_1"/>
<dbReference type="InParanoid" id="Q9EP64"/>
<dbReference type="OMA" id="TIYWIHP"/>
<dbReference type="OrthoDB" id="5985282at2759"/>
<dbReference type="PhylomeDB" id="Q9EP64"/>
<dbReference type="TreeFam" id="TF329712"/>
<dbReference type="BioGRID-ORCS" id="64103">
    <property type="hits" value="0 hits in 77 CRISPR screens"/>
</dbReference>
<dbReference type="PRO" id="PR:Q9EP64"/>
<dbReference type="Proteomes" id="UP000000589">
    <property type="component" value="Chromosome X"/>
</dbReference>
<dbReference type="RNAct" id="Q9EP64">
    <property type="molecule type" value="protein"/>
</dbReference>
<dbReference type="Bgee" id="ENSMUSG00000031250">
    <property type="expression patterns" value="Expressed in vault of skull and 133 other cell types or tissues"/>
</dbReference>
<dbReference type="GO" id="GO:0016020">
    <property type="term" value="C:membrane"/>
    <property type="evidence" value="ECO:0007669"/>
    <property type="project" value="UniProtKB-SubCell"/>
</dbReference>
<dbReference type="GO" id="GO:0005635">
    <property type="term" value="C:nuclear envelope"/>
    <property type="evidence" value="ECO:0007669"/>
    <property type="project" value="UniProtKB-SubCell"/>
</dbReference>
<dbReference type="GO" id="GO:0001886">
    <property type="term" value="P:endothelial cell morphogenesis"/>
    <property type="evidence" value="ECO:0000314"/>
    <property type="project" value="MGI"/>
</dbReference>
<dbReference type="GO" id="GO:0016525">
    <property type="term" value="P:negative regulation of angiogenesis"/>
    <property type="evidence" value="ECO:0000314"/>
    <property type="project" value="MGI"/>
</dbReference>
<dbReference type="GO" id="GO:0001937">
    <property type="term" value="P:negative regulation of endothelial cell proliferation"/>
    <property type="evidence" value="ECO:0000314"/>
    <property type="project" value="MGI"/>
</dbReference>
<dbReference type="InterPro" id="IPR007084">
    <property type="entry name" value="BRICHOS_dom"/>
</dbReference>
<dbReference type="InterPro" id="IPR043405">
    <property type="entry name" value="Chondromodulin/Tenomodulin"/>
</dbReference>
<dbReference type="PANTHER" id="PTHR14064">
    <property type="entry name" value="CHONDROMODULIN-RELATED"/>
    <property type="match status" value="1"/>
</dbReference>
<dbReference type="PANTHER" id="PTHR14064:SF3">
    <property type="entry name" value="TENOMODULIN"/>
    <property type="match status" value="1"/>
</dbReference>
<dbReference type="Pfam" id="PF04089">
    <property type="entry name" value="BRICHOS"/>
    <property type="match status" value="1"/>
</dbReference>
<dbReference type="SMART" id="SM01039">
    <property type="entry name" value="BRICHOS"/>
    <property type="match status" value="1"/>
</dbReference>
<dbReference type="PROSITE" id="PS50869">
    <property type="entry name" value="BRICHOS"/>
    <property type="match status" value="1"/>
</dbReference>
<reference key="1">
    <citation type="journal article" date="2001" name="Biochem. Biophys. Res. Commun.">
        <title>Molecular cloning and characterization of ChM1L, a novel membrane molecule similar to chondromodulin-I.</title>
        <authorList>
            <person name="Yamana K."/>
            <person name="Wada H."/>
            <person name="Takahashi Y."/>
            <person name="Sato H."/>
            <person name="Kasahara Y."/>
            <person name="Kiyoki M."/>
        </authorList>
    </citation>
    <scope>NUCLEOTIDE SEQUENCE [MRNA]</scope>
</reference>
<reference key="2">
    <citation type="journal article" date="2001" name="Biochem. Biophys. Res. Commun.">
        <title>Molecular cloning of tenomodulin, a novel chondromodulin-I related gene.</title>
        <authorList>
            <person name="Shukunami C."/>
            <person name="Oshima Y."/>
            <person name="Hiraki Y."/>
        </authorList>
    </citation>
    <scope>NUCLEOTIDE SEQUENCE [MRNA]</scope>
</reference>
<reference key="3">
    <citation type="journal article" date="2001" name="Dev. Dyn.">
        <title>A novel gene, tendin, is strongly expressed in tendons and ligaments and shows high homology with chondromodulin-I.</title>
        <authorList>
            <person name="Brandau O."/>
            <person name="Meindl A."/>
            <person name="Faessler R."/>
            <person name="Aszodi A."/>
        </authorList>
    </citation>
    <scope>NUCLEOTIDE SEQUENCE [MRNA]</scope>
    <scope>TISSUE SPECIFICITY</scope>
    <scope>DEVELOPMENTAL STAGE</scope>
    <source>
        <strain>C57BL/6J</strain>
    </source>
</reference>
<reference key="4">
    <citation type="submission" date="1999-10" db="EMBL/GenBank/DDBJ databases">
        <title>Gene expression alterations revealed by suppression subtractive hybridization in rat soleus muscle disuse atrophy.</title>
        <authorList>
            <person name="Cros N."/>
            <person name="Tkatchenko A.V."/>
            <person name="Leclerc L."/>
            <person name="Leger J.J."/>
            <person name="Marini J.-F."/>
            <person name="Dechesne C.A."/>
        </authorList>
    </citation>
    <scope>NUCLEOTIDE SEQUENCE [MRNA]</scope>
    <source>
        <strain>C57BL/10ScSn</strain>
        <tissue>Skeletal muscle</tissue>
    </source>
</reference>
<reference key="5">
    <citation type="journal article" date="2005" name="Science">
        <title>The transcriptional landscape of the mammalian genome.</title>
        <authorList>
            <person name="Carninci P."/>
            <person name="Kasukawa T."/>
            <person name="Katayama S."/>
            <person name="Gough J."/>
            <person name="Frith M.C."/>
            <person name="Maeda N."/>
            <person name="Oyama R."/>
            <person name="Ravasi T."/>
            <person name="Lenhard B."/>
            <person name="Wells C."/>
            <person name="Kodzius R."/>
            <person name="Shimokawa K."/>
            <person name="Bajic V.B."/>
            <person name="Brenner S.E."/>
            <person name="Batalov S."/>
            <person name="Forrest A.R."/>
            <person name="Zavolan M."/>
            <person name="Davis M.J."/>
            <person name="Wilming L.G."/>
            <person name="Aidinis V."/>
            <person name="Allen J.E."/>
            <person name="Ambesi-Impiombato A."/>
            <person name="Apweiler R."/>
            <person name="Aturaliya R.N."/>
            <person name="Bailey T.L."/>
            <person name="Bansal M."/>
            <person name="Baxter L."/>
            <person name="Beisel K.W."/>
            <person name="Bersano T."/>
            <person name="Bono H."/>
            <person name="Chalk A.M."/>
            <person name="Chiu K.P."/>
            <person name="Choudhary V."/>
            <person name="Christoffels A."/>
            <person name="Clutterbuck D.R."/>
            <person name="Crowe M.L."/>
            <person name="Dalla E."/>
            <person name="Dalrymple B.P."/>
            <person name="de Bono B."/>
            <person name="Della Gatta G."/>
            <person name="di Bernardo D."/>
            <person name="Down T."/>
            <person name="Engstrom P."/>
            <person name="Fagiolini M."/>
            <person name="Faulkner G."/>
            <person name="Fletcher C.F."/>
            <person name="Fukushima T."/>
            <person name="Furuno M."/>
            <person name="Futaki S."/>
            <person name="Gariboldi M."/>
            <person name="Georgii-Hemming P."/>
            <person name="Gingeras T.R."/>
            <person name="Gojobori T."/>
            <person name="Green R.E."/>
            <person name="Gustincich S."/>
            <person name="Harbers M."/>
            <person name="Hayashi Y."/>
            <person name="Hensch T.K."/>
            <person name="Hirokawa N."/>
            <person name="Hill D."/>
            <person name="Huminiecki L."/>
            <person name="Iacono M."/>
            <person name="Ikeo K."/>
            <person name="Iwama A."/>
            <person name="Ishikawa T."/>
            <person name="Jakt M."/>
            <person name="Kanapin A."/>
            <person name="Katoh M."/>
            <person name="Kawasawa Y."/>
            <person name="Kelso J."/>
            <person name="Kitamura H."/>
            <person name="Kitano H."/>
            <person name="Kollias G."/>
            <person name="Krishnan S.P."/>
            <person name="Kruger A."/>
            <person name="Kummerfeld S.K."/>
            <person name="Kurochkin I.V."/>
            <person name="Lareau L.F."/>
            <person name="Lazarevic D."/>
            <person name="Lipovich L."/>
            <person name="Liu J."/>
            <person name="Liuni S."/>
            <person name="McWilliam S."/>
            <person name="Madan Babu M."/>
            <person name="Madera M."/>
            <person name="Marchionni L."/>
            <person name="Matsuda H."/>
            <person name="Matsuzawa S."/>
            <person name="Miki H."/>
            <person name="Mignone F."/>
            <person name="Miyake S."/>
            <person name="Morris K."/>
            <person name="Mottagui-Tabar S."/>
            <person name="Mulder N."/>
            <person name="Nakano N."/>
            <person name="Nakauchi H."/>
            <person name="Ng P."/>
            <person name="Nilsson R."/>
            <person name="Nishiguchi S."/>
            <person name="Nishikawa S."/>
            <person name="Nori F."/>
            <person name="Ohara O."/>
            <person name="Okazaki Y."/>
            <person name="Orlando V."/>
            <person name="Pang K.C."/>
            <person name="Pavan W.J."/>
            <person name="Pavesi G."/>
            <person name="Pesole G."/>
            <person name="Petrovsky N."/>
            <person name="Piazza S."/>
            <person name="Reed J."/>
            <person name="Reid J.F."/>
            <person name="Ring B.Z."/>
            <person name="Ringwald M."/>
            <person name="Rost B."/>
            <person name="Ruan Y."/>
            <person name="Salzberg S.L."/>
            <person name="Sandelin A."/>
            <person name="Schneider C."/>
            <person name="Schoenbach C."/>
            <person name="Sekiguchi K."/>
            <person name="Semple C.A."/>
            <person name="Seno S."/>
            <person name="Sessa L."/>
            <person name="Sheng Y."/>
            <person name="Shibata Y."/>
            <person name="Shimada H."/>
            <person name="Shimada K."/>
            <person name="Silva D."/>
            <person name="Sinclair B."/>
            <person name="Sperling S."/>
            <person name="Stupka E."/>
            <person name="Sugiura K."/>
            <person name="Sultana R."/>
            <person name="Takenaka Y."/>
            <person name="Taki K."/>
            <person name="Tammoja K."/>
            <person name="Tan S.L."/>
            <person name="Tang S."/>
            <person name="Taylor M.S."/>
            <person name="Tegner J."/>
            <person name="Teichmann S.A."/>
            <person name="Ueda H.R."/>
            <person name="van Nimwegen E."/>
            <person name="Verardo R."/>
            <person name="Wei C.L."/>
            <person name="Yagi K."/>
            <person name="Yamanishi H."/>
            <person name="Zabarovsky E."/>
            <person name="Zhu S."/>
            <person name="Zimmer A."/>
            <person name="Hide W."/>
            <person name="Bult C."/>
            <person name="Grimmond S.M."/>
            <person name="Teasdale R.D."/>
            <person name="Liu E.T."/>
            <person name="Brusic V."/>
            <person name="Quackenbush J."/>
            <person name="Wahlestedt C."/>
            <person name="Mattick J.S."/>
            <person name="Hume D.A."/>
            <person name="Kai C."/>
            <person name="Sasaki D."/>
            <person name="Tomaru Y."/>
            <person name="Fukuda S."/>
            <person name="Kanamori-Katayama M."/>
            <person name="Suzuki M."/>
            <person name="Aoki J."/>
            <person name="Arakawa T."/>
            <person name="Iida J."/>
            <person name="Imamura K."/>
            <person name="Itoh M."/>
            <person name="Kato T."/>
            <person name="Kawaji H."/>
            <person name="Kawagashira N."/>
            <person name="Kawashima T."/>
            <person name="Kojima M."/>
            <person name="Kondo S."/>
            <person name="Konno H."/>
            <person name="Nakano K."/>
            <person name="Ninomiya N."/>
            <person name="Nishio T."/>
            <person name="Okada M."/>
            <person name="Plessy C."/>
            <person name="Shibata K."/>
            <person name="Shiraki T."/>
            <person name="Suzuki S."/>
            <person name="Tagami M."/>
            <person name="Waki K."/>
            <person name="Watahiki A."/>
            <person name="Okamura-Oho Y."/>
            <person name="Suzuki H."/>
            <person name="Kawai J."/>
            <person name="Hayashizaki Y."/>
        </authorList>
    </citation>
    <scope>NUCLEOTIDE SEQUENCE [LARGE SCALE MRNA]</scope>
    <source>
        <strain>C57BL/6J</strain>
        <tissue>Head</tissue>
    </source>
</reference>
<reference key="6">
    <citation type="journal article" date="2004" name="Genome Res.">
        <title>The status, quality, and expansion of the NIH full-length cDNA project: the Mammalian Gene Collection (MGC).</title>
        <authorList>
            <consortium name="The MGC Project Team"/>
        </authorList>
    </citation>
    <scope>NUCLEOTIDE SEQUENCE [LARGE SCALE MRNA]</scope>
    <source>
        <strain>C57BL/6J</strain>
        <strain>FVB/N</strain>
        <tissue>Mammary tumor</tissue>
    </source>
</reference>
<name>TNMD_MOUSE</name>
<sequence>MAKNPPENCEGCHILNAEALKSKKICKSLKICGLVFGILALTLIVLFWGSKHFWPEVSKKTYDMEHTFYSNGEKKKIYMEIDPITRTEIFRSGNGTDETLEVHDFKNGYTGIYFVGLQKCFIKTQIKVIPEFSEPEEEIDENEEITTTFFEQSVIWVPAEKPIENRDFLKNSKILEICDNVTMYWINPTLIAVSELQDFEEDGEDLHFPTSEKKGIDQNEQWVVPQVKVEKTRHTRQASEEDLPINDYTENGIEFDPMLDERGYCCIYCRRGNRYCRRVCEPLLGYYPYPYCYQGGRVICRVIMPCNWWVARMLGRV</sequence>